<organism>
    <name type="scientific">Streptococcus pyogenes serotype M4 (strain MGAS10750)</name>
    <dbReference type="NCBI Taxonomy" id="370554"/>
    <lineage>
        <taxon>Bacteria</taxon>
        <taxon>Bacillati</taxon>
        <taxon>Bacillota</taxon>
        <taxon>Bacilli</taxon>
        <taxon>Lactobacillales</taxon>
        <taxon>Streptococcaceae</taxon>
        <taxon>Streptococcus</taxon>
    </lineage>
</organism>
<accession>Q1J7G3</accession>
<feature type="chain" id="PRO_0000368808" description="ATP synthase subunit b">
    <location>
        <begin position="1"/>
        <end position="164"/>
    </location>
</feature>
<feature type="transmembrane region" description="Helical" evidence="1">
    <location>
        <begin position="6"/>
        <end position="26"/>
    </location>
</feature>
<proteinExistence type="inferred from homology"/>
<name>ATPF_STRPF</name>
<comment type="function">
    <text evidence="1">F(1)F(0) ATP synthase produces ATP from ADP in the presence of a proton or sodium gradient. F-type ATPases consist of two structural domains, F(1) containing the extramembraneous catalytic core and F(0) containing the membrane proton channel, linked together by a central stalk and a peripheral stalk. During catalysis, ATP synthesis in the catalytic domain of F(1) is coupled via a rotary mechanism of the central stalk subunits to proton translocation.</text>
</comment>
<comment type="function">
    <text evidence="1">Component of the F(0) channel, it forms part of the peripheral stalk, linking F(1) to F(0).</text>
</comment>
<comment type="subunit">
    <text evidence="1">F-type ATPases have 2 components, F(1) - the catalytic core - and F(0) - the membrane proton channel. F(1) has five subunits: alpha(3), beta(3), gamma(1), delta(1), epsilon(1). F(0) has three main subunits: a(1), b(2) and c(10-14). The alpha and beta chains form an alternating ring which encloses part of the gamma chain. F(1) is attached to F(0) by a central stalk formed by the gamma and epsilon chains, while a peripheral stalk is formed by the delta and b chains.</text>
</comment>
<comment type="subcellular location">
    <subcellularLocation>
        <location evidence="1">Cell membrane</location>
        <topology evidence="1">Single-pass membrane protein</topology>
    </subcellularLocation>
</comment>
<comment type="similarity">
    <text evidence="1">Belongs to the ATPase B chain family.</text>
</comment>
<protein>
    <recommendedName>
        <fullName evidence="1">ATP synthase subunit b</fullName>
    </recommendedName>
    <alternativeName>
        <fullName evidence="1">ATP synthase F(0) sector subunit b</fullName>
    </alternativeName>
    <alternativeName>
        <fullName evidence="1">ATPase subunit I</fullName>
    </alternativeName>
    <alternativeName>
        <fullName evidence="1">F-type ATPase subunit b</fullName>
        <shortName evidence="1">F-ATPase subunit b</shortName>
    </alternativeName>
</protein>
<gene>
    <name evidence="1" type="primary">atpF</name>
    <name type="ordered locus">MGAS10750_Spy0661</name>
</gene>
<evidence type="ECO:0000255" key="1">
    <source>
        <dbReference type="HAMAP-Rule" id="MF_01398"/>
    </source>
</evidence>
<reference key="1">
    <citation type="journal article" date="2006" name="Proc. Natl. Acad. Sci. U.S.A.">
        <title>Molecular genetic anatomy of inter- and intraserotype variation in the human bacterial pathogen group A Streptococcus.</title>
        <authorList>
            <person name="Beres S.B."/>
            <person name="Richter E.W."/>
            <person name="Nagiec M.J."/>
            <person name="Sumby P."/>
            <person name="Porcella S.F."/>
            <person name="DeLeo F.R."/>
            <person name="Musser J.M."/>
        </authorList>
    </citation>
    <scope>NUCLEOTIDE SEQUENCE [LARGE SCALE GENOMIC DNA]</scope>
    <source>
        <strain>MGAS10750</strain>
    </source>
</reference>
<dbReference type="EMBL" id="CP000262">
    <property type="protein sequence ID" value="ABF37611.1"/>
    <property type="molecule type" value="Genomic_DNA"/>
</dbReference>
<dbReference type="SMR" id="Q1J7G3"/>
<dbReference type="KEGG" id="spi:MGAS10750_Spy0661"/>
<dbReference type="HOGENOM" id="CLU_079215_4_2_9"/>
<dbReference type="Proteomes" id="UP000002434">
    <property type="component" value="Chromosome"/>
</dbReference>
<dbReference type="GO" id="GO:0005886">
    <property type="term" value="C:plasma membrane"/>
    <property type="evidence" value="ECO:0007669"/>
    <property type="project" value="UniProtKB-SubCell"/>
</dbReference>
<dbReference type="GO" id="GO:0045259">
    <property type="term" value="C:proton-transporting ATP synthase complex"/>
    <property type="evidence" value="ECO:0007669"/>
    <property type="project" value="UniProtKB-KW"/>
</dbReference>
<dbReference type="GO" id="GO:0046933">
    <property type="term" value="F:proton-transporting ATP synthase activity, rotational mechanism"/>
    <property type="evidence" value="ECO:0007669"/>
    <property type="project" value="UniProtKB-UniRule"/>
</dbReference>
<dbReference type="GO" id="GO:0046961">
    <property type="term" value="F:proton-transporting ATPase activity, rotational mechanism"/>
    <property type="evidence" value="ECO:0007669"/>
    <property type="project" value="TreeGrafter"/>
</dbReference>
<dbReference type="CDD" id="cd06503">
    <property type="entry name" value="ATP-synt_Fo_b"/>
    <property type="match status" value="1"/>
</dbReference>
<dbReference type="HAMAP" id="MF_01398">
    <property type="entry name" value="ATP_synth_b_bprime"/>
    <property type="match status" value="1"/>
</dbReference>
<dbReference type="InterPro" id="IPR028987">
    <property type="entry name" value="ATP_synth_B-like_membr_sf"/>
</dbReference>
<dbReference type="InterPro" id="IPR002146">
    <property type="entry name" value="ATP_synth_b/b'su_bac/chlpt"/>
</dbReference>
<dbReference type="InterPro" id="IPR005864">
    <property type="entry name" value="ATP_synth_F0_bsu_bac"/>
</dbReference>
<dbReference type="InterPro" id="IPR050059">
    <property type="entry name" value="ATP_synthase_B_chain"/>
</dbReference>
<dbReference type="NCBIfam" id="TIGR01144">
    <property type="entry name" value="ATP_synt_b"/>
    <property type="match status" value="1"/>
</dbReference>
<dbReference type="PANTHER" id="PTHR33445:SF1">
    <property type="entry name" value="ATP SYNTHASE SUBUNIT B"/>
    <property type="match status" value="1"/>
</dbReference>
<dbReference type="PANTHER" id="PTHR33445">
    <property type="entry name" value="ATP SYNTHASE SUBUNIT B', CHLOROPLASTIC"/>
    <property type="match status" value="1"/>
</dbReference>
<dbReference type="Pfam" id="PF00430">
    <property type="entry name" value="ATP-synt_B"/>
    <property type="match status" value="1"/>
</dbReference>
<dbReference type="SUPFAM" id="SSF81573">
    <property type="entry name" value="F1F0 ATP synthase subunit B, membrane domain"/>
    <property type="match status" value="1"/>
</dbReference>
<keyword id="KW-0066">ATP synthesis</keyword>
<keyword id="KW-1003">Cell membrane</keyword>
<keyword id="KW-0138">CF(0)</keyword>
<keyword id="KW-0375">Hydrogen ion transport</keyword>
<keyword id="KW-0406">Ion transport</keyword>
<keyword id="KW-0472">Membrane</keyword>
<keyword id="KW-0812">Transmembrane</keyword>
<keyword id="KW-1133">Transmembrane helix</keyword>
<keyword id="KW-0813">Transport</keyword>
<sequence length="164" mass="17782">MSITFGELVGNFILVTGSVIVLLLLIKKFAWGAIESILQTRSQQISRDIDQAEQSRLSAQQLEAKSQANLDASRSQASKIISDAKEIGQLQGDKLVAEATDEAKRLKEKALTDIEQSKSDAISAVKTEMSDLTVLLAEKIMGANLDKTAQSQLIDSYLDDLGEA</sequence>